<geneLocation type="mitochondrion"/>
<accession>Q01148</accession>
<feature type="chain" id="PRO_0000117499" description="NADH-ubiquinone oxidoreductase chain 1">
    <location>
        <begin position="1"/>
        <end position="325"/>
    </location>
</feature>
<feature type="transmembrane region" description="Helical" evidence="2">
    <location>
        <begin position="5"/>
        <end position="25"/>
    </location>
</feature>
<feature type="transmembrane region" description="Helical" evidence="2">
    <location>
        <begin position="40"/>
        <end position="60"/>
    </location>
</feature>
<feature type="transmembrane region" description="Helical" evidence="2">
    <location>
        <begin position="79"/>
        <end position="99"/>
    </location>
</feature>
<feature type="transmembrane region" description="Helical" evidence="2">
    <location>
        <begin position="105"/>
        <end position="125"/>
    </location>
</feature>
<feature type="transmembrane region" description="Helical" evidence="2">
    <location>
        <begin position="151"/>
        <end position="171"/>
    </location>
</feature>
<feature type="transmembrane region" description="Helical" evidence="2">
    <location>
        <begin position="177"/>
        <end position="197"/>
    </location>
</feature>
<feature type="transmembrane region" description="Helical" evidence="2">
    <location>
        <begin position="237"/>
        <end position="257"/>
    </location>
</feature>
<feature type="transmembrane region" description="Helical" evidence="2">
    <location>
        <begin position="263"/>
        <end position="283"/>
    </location>
</feature>
<name>NU1M_WHEAT</name>
<reference key="1">
    <citation type="journal article" date="1991" name="Cell">
        <title>The wheat mitochondrial gene for subunit I of the NADH dehydrogenase complex: a trans-splicing model for this gene-in-pieces.</title>
        <authorList>
            <person name="Chapdelaine Y."/>
            <person name="Bonen L."/>
        </authorList>
    </citation>
    <scope>NUCLEOTIDE SEQUENCE [GENOMIC DNA]</scope>
    <source>
        <strain>cv. Thatcher</strain>
    </source>
</reference>
<comment type="function">
    <text evidence="1">Core subunit of the mitochondrial membrane respiratory chain NADH dehydrogenase (Complex I) that is believed to belong to the minimal assembly required for catalysis. Complex I functions in the transfer of electrons from NADH to the respiratory chain. The immediate electron acceptor for the enzyme is believed to be ubiquinone (By similarity).</text>
</comment>
<comment type="catalytic activity">
    <reaction>
        <text>a ubiquinone + NADH + 5 H(+)(in) = a ubiquinol + NAD(+) + 4 H(+)(out)</text>
        <dbReference type="Rhea" id="RHEA:29091"/>
        <dbReference type="Rhea" id="RHEA-COMP:9565"/>
        <dbReference type="Rhea" id="RHEA-COMP:9566"/>
        <dbReference type="ChEBI" id="CHEBI:15378"/>
        <dbReference type="ChEBI" id="CHEBI:16389"/>
        <dbReference type="ChEBI" id="CHEBI:17976"/>
        <dbReference type="ChEBI" id="CHEBI:57540"/>
        <dbReference type="ChEBI" id="CHEBI:57945"/>
        <dbReference type="EC" id="7.1.1.2"/>
    </reaction>
</comment>
<comment type="subcellular location">
    <subcellularLocation>
        <location evidence="1">Mitochondrion inner membrane</location>
        <topology evidence="1">Multi-pass membrane protein</topology>
    </subcellularLocation>
</comment>
<comment type="RNA editing">
    <location>
        <position position="1"/>
    </location>
    <location>
        <position position="72"/>
    </location>
    <location>
        <position position="103"/>
    </location>
    <location>
        <position position="146"/>
    </location>
    <location>
        <position position="164"/>
    </location>
    <location>
        <position position="167"/>
    </location>
    <location>
        <position position="179"/>
    </location>
    <location>
        <position position="191"/>
    </location>
    <location>
        <position position="193"/>
    </location>
    <location>
        <position position="194"/>
    </location>
    <location>
        <position position="203"/>
    </location>
    <location>
        <position position="225"/>
    </location>
    <location>
        <position position="245"/>
    </location>
    <location>
        <position position="248"/>
    </location>
    <text>The initiator methionine is created by RNA editing.</text>
</comment>
<comment type="similarity">
    <text evidence="3">Belongs to the complex I subunit 1 family.</text>
</comment>
<protein>
    <recommendedName>
        <fullName>NADH-ubiquinone oxidoreductase chain 1</fullName>
        <ecNumber>7.1.1.2</ecNumber>
    </recommendedName>
    <alternativeName>
        <fullName>NADH dehydrogenase subunit 1</fullName>
    </alternativeName>
</protein>
<keyword id="KW-0249">Electron transport</keyword>
<keyword id="KW-0472">Membrane</keyword>
<keyword id="KW-0496">Mitochondrion</keyword>
<keyword id="KW-0999">Mitochondrion inner membrane</keyword>
<keyword id="KW-0520">NAD</keyword>
<keyword id="KW-1185">Reference proteome</keyword>
<keyword id="KW-0679">Respiratory chain</keyword>
<keyword id="KW-0691">RNA editing</keyword>
<keyword id="KW-1278">Translocase</keyword>
<keyword id="KW-0812">Transmembrane</keyword>
<keyword id="KW-1133">Transmembrane helix</keyword>
<keyword id="KW-0813">Transport</keyword>
<keyword id="KW-0830">Ubiquinone</keyword>
<dbReference type="EC" id="7.1.1.2"/>
<dbReference type="EMBL" id="X57968">
    <property type="protein sequence ID" value="CAA41034.1"/>
    <property type="status" value="ALT_SEQ"/>
    <property type="molecule type" value="Genomic_DNA"/>
</dbReference>
<dbReference type="EMBL" id="X57967">
    <property type="protein sequence ID" value="CAA41034.1"/>
    <property type="status" value="JOINED"/>
    <property type="molecule type" value="Genomic_DNA"/>
</dbReference>
<dbReference type="EMBL" id="X57966">
    <property type="protein sequence ID" value="CAA41034.1"/>
    <property type="status" value="JOINED"/>
    <property type="molecule type" value="Genomic_DNA"/>
</dbReference>
<dbReference type="EMBL" id="X57965">
    <property type="protein sequence ID" value="CAA41034.1"/>
    <property type="status" value="JOINED"/>
    <property type="molecule type" value="Genomic_DNA"/>
</dbReference>
<dbReference type="PIR" id="A38489">
    <property type="entry name" value="DNWTU1"/>
</dbReference>
<dbReference type="RefSeq" id="YP_398392.1">
    <property type="nucleotide sequence ID" value="NC_007579.1"/>
</dbReference>
<dbReference type="SMR" id="Q01148"/>
<dbReference type="PaxDb" id="4565-Traes_1AL_D647E23C6.1"/>
<dbReference type="eggNOG" id="KOG4770">
    <property type="taxonomic scope" value="Eukaryota"/>
</dbReference>
<dbReference type="Proteomes" id="UP000019116">
    <property type="component" value="Unplaced"/>
</dbReference>
<dbReference type="GO" id="GO:0005743">
    <property type="term" value="C:mitochondrial inner membrane"/>
    <property type="evidence" value="ECO:0007669"/>
    <property type="project" value="UniProtKB-SubCell"/>
</dbReference>
<dbReference type="GO" id="GO:0008137">
    <property type="term" value="F:NADH dehydrogenase (ubiquinone) activity"/>
    <property type="evidence" value="ECO:0007669"/>
    <property type="project" value="UniProtKB-EC"/>
</dbReference>
<dbReference type="HAMAP" id="MF_01350">
    <property type="entry name" value="NDH1_NuoH"/>
    <property type="match status" value="1"/>
</dbReference>
<dbReference type="InterPro" id="IPR001694">
    <property type="entry name" value="NADH_UbQ_OxRdtase_su1/FPO"/>
</dbReference>
<dbReference type="InterPro" id="IPR018086">
    <property type="entry name" value="NADH_UbQ_OxRdtase_su1_CS"/>
</dbReference>
<dbReference type="NCBIfam" id="NF004741">
    <property type="entry name" value="PRK06076.1-2"/>
    <property type="match status" value="1"/>
</dbReference>
<dbReference type="NCBIfam" id="NF004745">
    <property type="entry name" value="PRK06076.1-6"/>
    <property type="match status" value="1"/>
</dbReference>
<dbReference type="PANTHER" id="PTHR11432">
    <property type="entry name" value="NADH DEHYDROGENASE SUBUNIT 1"/>
    <property type="match status" value="1"/>
</dbReference>
<dbReference type="PANTHER" id="PTHR11432:SF3">
    <property type="entry name" value="NADH-UBIQUINONE OXIDOREDUCTASE CHAIN 1"/>
    <property type="match status" value="1"/>
</dbReference>
<dbReference type="Pfam" id="PF00146">
    <property type="entry name" value="NADHdh"/>
    <property type="match status" value="1"/>
</dbReference>
<dbReference type="PROSITE" id="PS00667">
    <property type="entry name" value="COMPLEX1_ND1_1"/>
    <property type="match status" value="1"/>
</dbReference>
<dbReference type="PROSITE" id="PS00668">
    <property type="entry name" value="COMPLEX1_ND1_2"/>
    <property type="match status" value="1"/>
</dbReference>
<gene>
    <name type="primary">ND1</name>
    <name type="synonym">NAD1</name>
</gene>
<proteinExistence type="evidence at transcript level"/>
<evidence type="ECO:0000250" key="1"/>
<evidence type="ECO:0000255" key="2"/>
<evidence type="ECO:0000305" key="3"/>
<organism>
    <name type="scientific">Triticum aestivum</name>
    <name type="common">Wheat</name>
    <dbReference type="NCBI Taxonomy" id="4565"/>
    <lineage>
        <taxon>Eukaryota</taxon>
        <taxon>Viridiplantae</taxon>
        <taxon>Streptophyta</taxon>
        <taxon>Embryophyta</taxon>
        <taxon>Tracheophyta</taxon>
        <taxon>Spermatophyta</taxon>
        <taxon>Magnoliopsida</taxon>
        <taxon>Liliopsida</taxon>
        <taxon>Poales</taxon>
        <taxon>Poaceae</taxon>
        <taxon>BOP clade</taxon>
        <taxon>Pooideae</taxon>
        <taxon>Triticodae</taxon>
        <taxon>Triticeae</taxon>
        <taxon>Triticinae</taxon>
        <taxon>Triticum</taxon>
    </lineage>
</organism>
<sequence length="325" mass="35932">MYIAVPAEILCLILPLLLGVAFLVLAERKVMAFVQRRKGPDVVGSFGLLQPLADGLKLILKEPISPSSANFFLFRMAPVATFMLSLVAWAVVPFDYGMVLSDLNIGLLYLFAISSLGVYGIIIAGWSSNSKYAFLGALRSAAQMVSYEVSIGLILITVLICVGSCNLSEIVMAQKQIWFGIPLFPVLVMFFISCLAETNRAPFDLPEAEAELVAGYNVEYSSMGFALFFLGEYANMILMSGLCTLLFLGGWLPILDLPISKKIPCSIWFSIKVLLFLFLYIWVRAAFPRYRYDQLMGLGRKVFLPLSLARVVPVSGVSVTFRWLP</sequence>